<sequence length="141" mass="14929">MATIKVDVVSAEEQIFSGQAKFVALPGEAGELGILPGHTPLITRIRPGAVRIESESGDEEFVFVAGGILEVQPGAVTVLADTAIRGKDLDAAKAEEARKRAEETLQNAKSDIDLAKAQSELATAMAQLEAIQRLAKIRGKH</sequence>
<evidence type="ECO:0000255" key="1">
    <source>
        <dbReference type="HAMAP-Rule" id="MF_00530"/>
    </source>
</evidence>
<keyword id="KW-0066">ATP synthesis</keyword>
<keyword id="KW-0997">Cell inner membrane</keyword>
<keyword id="KW-1003">Cell membrane</keyword>
<keyword id="KW-0139">CF(1)</keyword>
<keyword id="KW-0375">Hydrogen ion transport</keyword>
<keyword id="KW-0406">Ion transport</keyword>
<keyword id="KW-0472">Membrane</keyword>
<keyword id="KW-0813">Transport</keyword>
<comment type="function">
    <text evidence="1">Produces ATP from ADP in the presence of a proton gradient across the membrane.</text>
</comment>
<comment type="subunit">
    <text evidence="1">F-type ATPases have 2 components, CF(1) - the catalytic core - and CF(0) - the membrane proton channel. CF(1) has five subunits: alpha(3), beta(3), gamma(1), delta(1), epsilon(1). CF(0) has three main subunits: a, b and c.</text>
</comment>
<comment type="subcellular location">
    <subcellularLocation>
        <location evidence="1">Cell inner membrane</location>
        <topology evidence="1">Peripheral membrane protein</topology>
    </subcellularLocation>
</comment>
<comment type="similarity">
    <text evidence="1">Belongs to the ATPase epsilon chain family.</text>
</comment>
<organism>
    <name type="scientific">Burkholderia mallei (strain NCTC 10247)</name>
    <dbReference type="NCBI Taxonomy" id="320389"/>
    <lineage>
        <taxon>Bacteria</taxon>
        <taxon>Pseudomonadati</taxon>
        <taxon>Pseudomonadota</taxon>
        <taxon>Betaproteobacteria</taxon>
        <taxon>Burkholderiales</taxon>
        <taxon>Burkholderiaceae</taxon>
        <taxon>Burkholderia</taxon>
        <taxon>pseudomallei group</taxon>
    </lineage>
</organism>
<name>ATPE_BURM7</name>
<protein>
    <recommendedName>
        <fullName evidence="1">ATP synthase epsilon chain</fullName>
    </recommendedName>
    <alternativeName>
        <fullName evidence="1">ATP synthase F1 sector epsilon subunit</fullName>
    </alternativeName>
    <alternativeName>
        <fullName evidence="1">F-ATPase epsilon subunit</fullName>
    </alternativeName>
</protein>
<reference key="1">
    <citation type="journal article" date="2010" name="Genome Biol. Evol.">
        <title>Continuing evolution of Burkholderia mallei through genome reduction and large-scale rearrangements.</title>
        <authorList>
            <person name="Losada L."/>
            <person name="Ronning C.M."/>
            <person name="DeShazer D."/>
            <person name="Woods D."/>
            <person name="Fedorova N."/>
            <person name="Kim H.S."/>
            <person name="Shabalina S.A."/>
            <person name="Pearson T.R."/>
            <person name="Brinkac L."/>
            <person name="Tan P."/>
            <person name="Nandi T."/>
            <person name="Crabtree J."/>
            <person name="Badger J."/>
            <person name="Beckstrom-Sternberg S."/>
            <person name="Saqib M."/>
            <person name="Schutzer S.E."/>
            <person name="Keim P."/>
            <person name="Nierman W.C."/>
        </authorList>
    </citation>
    <scope>NUCLEOTIDE SEQUENCE [LARGE SCALE GENOMIC DNA]</scope>
    <source>
        <strain>NCTC 10247</strain>
    </source>
</reference>
<feature type="chain" id="PRO_1000056460" description="ATP synthase epsilon chain">
    <location>
        <begin position="1"/>
        <end position="141"/>
    </location>
</feature>
<accession>A3MQK0</accession>
<proteinExistence type="inferred from homology"/>
<gene>
    <name evidence="1" type="primary">atpC</name>
    <name type="ordered locus">BMA10247_3016</name>
</gene>
<dbReference type="EMBL" id="CP000548">
    <property type="protein sequence ID" value="ABO05164.1"/>
    <property type="molecule type" value="Genomic_DNA"/>
</dbReference>
<dbReference type="RefSeq" id="WP_004195832.1">
    <property type="nucleotide sequence ID" value="NZ_CP007802.1"/>
</dbReference>
<dbReference type="SMR" id="A3MQK0"/>
<dbReference type="KEGG" id="bmaz:BM44_334"/>
<dbReference type="KEGG" id="bmn:BMA10247_3016"/>
<dbReference type="PATRIC" id="fig|320389.8.peg.369"/>
<dbReference type="GO" id="GO:0005886">
    <property type="term" value="C:plasma membrane"/>
    <property type="evidence" value="ECO:0007669"/>
    <property type="project" value="UniProtKB-SubCell"/>
</dbReference>
<dbReference type="GO" id="GO:0045259">
    <property type="term" value="C:proton-transporting ATP synthase complex"/>
    <property type="evidence" value="ECO:0007669"/>
    <property type="project" value="UniProtKB-KW"/>
</dbReference>
<dbReference type="GO" id="GO:0005524">
    <property type="term" value="F:ATP binding"/>
    <property type="evidence" value="ECO:0007669"/>
    <property type="project" value="UniProtKB-UniRule"/>
</dbReference>
<dbReference type="GO" id="GO:0046933">
    <property type="term" value="F:proton-transporting ATP synthase activity, rotational mechanism"/>
    <property type="evidence" value="ECO:0007669"/>
    <property type="project" value="UniProtKB-UniRule"/>
</dbReference>
<dbReference type="CDD" id="cd12152">
    <property type="entry name" value="F1-ATPase_delta"/>
    <property type="match status" value="1"/>
</dbReference>
<dbReference type="FunFam" id="2.60.15.10:FF:000001">
    <property type="entry name" value="ATP synthase epsilon chain"/>
    <property type="match status" value="1"/>
</dbReference>
<dbReference type="Gene3D" id="1.20.5.440">
    <property type="entry name" value="ATP synthase delta/epsilon subunit, C-terminal domain"/>
    <property type="match status" value="1"/>
</dbReference>
<dbReference type="Gene3D" id="2.60.15.10">
    <property type="entry name" value="F0F1 ATP synthase delta/epsilon subunit, N-terminal"/>
    <property type="match status" value="1"/>
</dbReference>
<dbReference type="HAMAP" id="MF_00530">
    <property type="entry name" value="ATP_synth_epsil_bac"/>
    <property type="match status" value="1"/>
</dbReference>
<dbReference type="InterPro" id="IPR036794">
    <property type="entry name" value="ATP_F1_dsu/esu_C_sf"/>
</dbReference>
<dbReference type="InterPro" id="IPR001469">
    <property type="entry name" value="ATP_synth_F1_dsu/esu"/>
</dbReference>
<dbReference type="InterPro" id="IPR020546">
    <property type="entry name" value="ATP_synth_F1_dsu/esu_N"/>
</dbReference>
<dbReference type="InterPro" id="IPR020547">
    <property type="entry name" value="ATP_synth_F1_esu_C"/>
</dbReference>
<dbReference type="InterPro" id="IPR036771">
    <property type="entry name" value="ATPsynth_dsu/esu_N"/>
</dbReference>
<dbReference type="NCBIfam" id="TIGR01216">
    <property type="entry name" value="ATP_synt_epsi"/>
    <property type="match status" value="1"/>
</dbReference>
<dbReference type="NCBIfam" id="NF001847">
    <property type="entry name" value="PRK00571.1-4"/>
    <property type="match status" value="1"/>
</dbReference>
<dbReference type="PANTHER" id="PTHR13822">
    <property type="entry name" value="ATP SYNTHASE DELTA/EPSILON CHAIN"/>
    <property type="match status" value="1"/>
</dbReference>
<dbReference type="PANTHER" id="PTHR13822:SF10">
    <property type="entry name" value="ATP SYNTHASE EPSILON CHAIN, CHLOROPLASTIC"/>
    <property type="match status" value="1"/>
</dbReference>
<dbReference type="Pfam" id="PF00401">
    <property type="entry name" value="ATP-synt_DE"/>
    <property type="match status" value="1"/>
</dbReference>
<dbReference type="Pfam" id="PF02823">
    <property type="entry name" value="ATP-synt_DE_N"/>
    <property type="match status" value="1"/>
</dbReference>
<dbReference type="SUPFAM" id="SSF46604">
    <property type="entry name" value="Epsilon subunit of F1F0-ATP synthase C-terminal domain"/>
    <property type="match status" value="1"/>
</dbReference>
<dbReference type="SUPFAM" id="SSF51344">
    <property type="entry name" value="Epsilon subunit of F1F0-ATP synthase N-terminal domain"/>
    <property type="match status" value="1"/>
</dbReference>